<comment type="function">
    <text evidence="1 2">Probable hormone (By similarity). Required for the proper formation of the central nervous system by attenuating cell proliferation during development (By similarity).</text>
</comment>
<comment type="subcellular location">
    <subcellularLocation>
        <location evidence="3">Secreted</location>
    </subcellularLocation>
    <subcellularLocation>
        <location evidence="3">Cytoplasm</location>
    </subcellularLocation>
    <subcellularLocation>
        <location evidence="3">Apical cell membrane</location>
    </subcellularLocation>
</comment>
<comment type="similarity">
    <text evidence="6">Belongs to the augurin family.</text>
</comment>
<name>AUGNB_DANRE</name>
<accession>P0CAX4</accession>
<accession>F1QPI8</accession>
<evidence type="ECO:0000250" key="1">
    <source>
        <dbReference type="UniProtKB" id="D4A540"/>
    </source>
</evidence>
<evidence type="ECO:0000250" key="2">
    <source>
        <dbReference type="UniProtKB" id="Q566V9"/>
    </source>
</evidence>
<evidence type="ECO:0000250" key="3">
    <source>
        <dbReference type="UniProtKB" id="Q9H1Z8"/>
    </source>
</evidence>
<evidence type="ECO:0000255" key="4"/>
<evidence type="ECO:0000256" key="5">
    <source>
        <dbReference type="SAM" id="MobiDB-lite"/>
    </source>
</evidence>
<evidence type="ECO:0000305" key="6"/>
<evidence type="ECO:0000312" key="7">
    <source>
        <dbReference type="Proteomes" id="UP000000437"/>
    </source>
</evidence>
<evidence type="ECO:0000312" key="8">
    <source>
        <dbReference type="ZFIN" id="ZDB-GENE-110324-2"/>
    </source>
</evidence>
<sequence>MSLHSLCVPTILLISVLSICLSSGGSSDSKLHRILIKRDAKEIESRPKAYISVQQSKAKEFLSGLHRTKRNVWDRSRPDVQQWIQQFMYMGYDEARLETDLSYWMDQARSNDQGRQHHHDENAPMSQQDPRYNRHGANVNYDYY</sequence>
<reference evidence="7" key="1">
    <citation type="journal article" date="2013" name="Nature">
        <title>The zebrafish reference genome sequence and its relationship to the human genome.</title>
        <authorList>
            <person name="Howe K."/>
            <person name="Clark M.D."/>
            <person name="Torroja C.F."/>
            <person name="Torrance J."/>
            <person name="Berthelot C."/>
            <person name="Muffato M."/>
            <person name="Collins J.E."/>
            <person name="Humphray S."/>
            <person name="McLaren K."/>
            <person name="Matthews L."/>
            <person name="McLaren S."/>
            <person name="Sealy I."/>
            <person name="Caccamo M."/>
            <person name="Churcher C."/>
            <person name="Scott C."/>
            <person name="Barrett J.C."/>
            <person name="Koch R."/>
            <person name="Rauch G.J."/>
            <person name="White S."/>
            <person name="Chow W."/>
            <person name="Kilian B."/>
            <person name="Quintais L.T."/>
            <person name="Guerra-Assuncao J.A."/>
            <person name="Zhou Y."/>
            <person name="Gu Y."/>
            <person name="Yen J."/>
            <person name="Vogel J.H."/>
            <person name="Eyre T."/>
            <person name="Redmond S."/>
            <person name="Banerjee R."/>
            <person name="Chi J."/>
            <person name="Fu B."/>
            <person name="Langley E."/>
            <person name="Maguire S.F."/>
            <person name="Laird G.K."/>
            <person name="Lloyd D."/>
            <person name="Kenyon E."/>
            <person name="Donaldson S."/>
            <person name="Sehra H."/>
            <person name="Almeida-King J."/>
            <person name="Loveland J."/>
            <person name="Trevanion S."/>
            <person name="Jones M."/>
            <person name="Quail M."/>
            <person name="Willey D."/>
            <person name="Hunt A."/>
            <person name="Burton J."/>
            <person name="Sims S."/>
            <person name="McLay K."/>
            <person name="Plumb B."/>
            <person name="Davis J."/>
            <person name="Clee C."/>
            <person name="Oliver K."/>
            <person name="Clark R."/>
            <person name="Riddle C."/>
            <person name="Elliot D."/>
            <person name="Threadgold G."/>
            <person name="Harden G."/>
            <person name="Ware D."/>
            <person name="Begum S."/>
            <person name="Mortimore B."/>
            <person name="Kerry G."/>
            <person name="Heath P."/>
            <person name="Phillimore B."/>
            <person name="Tracey A."/>
            <person name="Corby N."/>
            <person name="Dunn M."/>
            <person name="Johnson C."/>
            <person name="Wood J."/>
            <person name="Clark S."/>
            <person name="Pelan S."/>
            <person name="Griffiths G."/>
            <person name="Smith M."/>
            <person name="Glithero R."/>
            <person name="Howden P."/>
            <person name="Barker N."/>
            <person name="Lloyd C."/>
            <person name="Stevens C."/>
            <person name="Harley J."/>
            <person name="Holt K."/>
            <person name="Panagiotidis G."/>
            <person name="Lovell J."/>
            <person name="Beasley H."/>
            <person name="Henderson C."/>
            <person name="Gordon D."/>
            <person name="Auger K."/>
            <person name="Wright D."/>
            <person name="Collins J."/>
            <person name="Raisen C."/>
            <person name="Dyer L."/>
            <person name="Leung K."/>
            <person name="Robertson L."/>
            <person name="Ambridge K."/>
            <person name="Leongamornlert D."/>
            <person name="McGuire S."/>
            <person name="Gilderthorp R."/>
            <person name="Griffiths C."/>
            <person name="Manthravadi D."/>
            <person name="Nichol S."/>
            <person name="Barker G."/>
            <person name="Whitehead S."/>
            <person name="Kay M."/>
            <person name="Brown J."/>
            <person name="Murnane C."/>
            <person name="Gray E."/>
            <person name="Humphries M."/>
            <person name="Sycamore N."/>
            <person name="Barker D."/>
            <person name="Saunders D."/>
            <person name="Wallis J."/>
            <person name="Babbage A."/>
            <person name="Hammond S."/>
            <person name="Mashreghi-Mohammadi M."/>
            <person name="Barr L."/>
            <person name="Martin S."/>
            <person name="Wray P."/>
            <person name="Ellington A."/>
            <person name="Matthews N."/>
            <person name="Ellwood M."/>
            <person name="Woodmansey R."/>
            <person name="Clark G."/>
            <person name="Cooper J."/>
            <person name="Tromans A."/>
            <person name="Grafham D."/>
            <person name="Skuce C."/>
            <person name="Pandian R."/>
            <person name="Andrews R."/>
            <person name="Harrison E."/>
            <person name="Kimberley A."/>
            <person name="Garnett J."/>
            <person name="Fosker N."/>
            <person name="Hall R."/>
            <person name="Garner P."/>
            <person name="Kelly D."/>
            <person name="Bird C."/>
            <person name="Palmer S."/>
            <person name="Gehring I."/>
            <person name="Berger A."/>
            <person name="Dooley C.M."/>
            <person name="Ersan-Urun Z."/>
            <person name="Eser C."/>
            <person name="Geiger H."/>
            <person name="Geisler M."/>
            <person name="Karotki L."/>
            <person name="Kirn A."/>
            <person name="Konantz J."/>
            <person name="Konantz M."/>
            <person name="Oberlander M."/>
            <person name="Rudolph-Geiger S."/>
            <person name="Teucke M."/>
            <person name="Lanz C."/>
            <person name="Raddatz G."/>
            <person name="Osoegawa K."/>
            <person name="Zhu B."/>
            <person name="Rapp A."/>
            <person name="Widaa S."/>
            <person name="Langford C."/>
            <person name="Yang F."/>
            <person name="Schuster S.C."/>
            <person name="Carter N.P."/>
            <person name="Harrow J."/>
            <person name="Ning Z."/>
            <person name="Herrero J."/>
            <person name="Searle S.M."/>
            <person name="Enright A."/>
            <person name="Geisler R."/>
            <person name="Plasterk R.H."/>
            <person name="Lee C."/>
            <person name="Westerfield M."/>
            <person name="de Jong P.J."/>
            <person name="Zon L.I."/>
            <person name="Postlethwait J.H."/>
            <person name="Nusslein-Volhard C."/>
            <person name="Hubbard T.J."/>
            <person name="Roest Crollius H."/>
            <person name="Rogers J."/>
            <person name="Stemple D.L."/>
        </authorList>
    </citation>
    <scope>NUCLEOTIDE SEQUENCE [LARGE SCALE GENOMIC DNA]</scope>
    <source>
        <strain evidence="7">Tuebingen</strain>
    </source>
</reference>
<reference key="2">
    <citation type="submission" date="2005-04" db="EMBL/GenBank/DDBJ databases">
        <authorList>
            <consortium name="NIH - Zebrafish Gene Collection (ZGC) project"/>
        </authorList>
    </citation>
    <scope>NUCLEOTIDE SEQUENCE [LARGE SCALE MRNA]</scope>
    <source>
        <tissue>Larva</tissue>
    </source>
</reference>
<gene>
    <name evidence="8" type="primary">ecrg4b</name>
    <name type="ORF">im:7256818</name>
</gene>
<dbReference type="EMBL" id="CU683875">
    <property type="status" value="NOT_ANNOTATED_CDS"/>
    <property type="molecule type" value="Genomic_DNA"/>
</dbReference>
<dbReference type="EMBL" id="CU855811">
    <property type="status" value="NOT_ANNOTATED_CDS"/>
    <property type="molecule type" value="Genomic_DNA"/>
</dbReference>
<dbReference type="EMBL" id="BC095747">
    <property type="status" value="NOT_ANNOTATED_CDS"/>
    <property type="molecule type" value="mRNA"/>
</dbReference>
<dbReference type="FunCoup" id="P0CAX4">
    <property type="interactions" value="962"/>
</dbReference>
<dbReference type="STRING" id="7955.ENSDARP00000105276"/>
<dbReference type="PaxDb" id="7955-ENSDARP00000105276"/>
<dbReference type="AGR" id="ZFIN:ZDB-GENE-110324-2"/>
<dbReference type="ZFIN" id="ZDB-GENE-110324-2">
    <property type="gene designation" value="ecrg4b"/>
</dbReference>
<dbReference type="eggNOG" id="ENOG502RZPP">
    <property type="taxonomic scope" value="Eukaryota"/>
</dbReference>
<dbReference type="HOGENOM" id="CLU_153579_0_0_1"/>
<dbReference type="InParanoid" id="P0CAX4"/>
<dbReference type="PhylomeDB" id="P0CAX4"/>
<dbReference type="TreeFam" id="TF336161"/>
<dbReference type="PRO" id="PR:P0CAX4"/>
<dbReference type="Proteomes" id="UP000000437">
    <property type="component" value="Unplaced"/>
</dbReference>
<dbReference type="GO" id="GO:0016324">
    <property type="term" value="C:apical plasma membrane"/>
    <property type="evidence" value="ECO:0000250"/>
    <property type="project" value="UniProtKB"/>
</dbReference>
<dbReference type="GO" id="GO:0005737">
    <property type="term" value="C:cytoplasm"/>
    <property type="evidence" value="ECO:0000250"/>
    <property type="project" value="UniProtKB"/>
</dbReference>
<dbReference type="GO" id="GO:0005615">
    <property type="term" value="C:extracellular space"/>
    <property type="evidence" value="ECO:0000250"/>
    <property type="project" value="UniProtKB"/>
</dbReference>
<dbReference type="GO" id="GO:0031145">
    <property type="term" value="P:anaphase-promoting complex-dependent catabolic process"/>
    <property type="evidence" value="ECO:0000318"/>
    <property type="project" value="GO_Central"/>
</dbReference>
<dbReference type="GO" id="GO:0090398">
    <property type="term" value="P:cellular senescence"/>
    <property type="evidence" value="ECO:0000318"/>
    <property type="project" value="GO_Central"/>
</dbReference>
<dbReference type="GO" id="GO:0007417">
    <property type="term" value="P:central nervous system development"/>
    <property type="evidence" value="ECO:0000250"/>
    <property type="project" value="UniProtKB"/>
</dbReference>
<dbReference type="GO" id="GO:0070314">
    <property type="term" value="P:G1 to G0 transition"/>
    <property type="evidence" value="ECO:0000318"/>
    <property type="project" value="GO_Central"/>
</dbReference>
<dbReference type="GO" id="GO:0008285">
    <property type="term" value="P:negative regulation of cell population proliferation"/>
    <property type="evidence" value="ECO:0000250"/>
    <property type="project" value="UniProtKB"/>
</dbReference>
<dbReference type="GO" id="GO:0042127">
    <property type="term" value="P:regulation of cell population proliferation"/>
    <property type="evidence" value="ECO:0000318"/>
    <property type="project" value="GO_Central"/>
</dbReference>
<dbReference type="GO" id="GO:0009611">
    <property type="term" value="P:response to wounding"/>
    <property type="evidence" value="ECO:0000250"/>
    <property type="project" value="UniProtKB"/>
</dbReference>
<dbReference type="InterPro" id="IPR028173">
    <property type="entry name" value="Augurin"/>
</dbReference>
<dbReference type="PANTHER" id="PTHR31613">
    <property type="entry name" value="AUGURIN"/>
    <property type="match status" value="1"/>
</dbReference>
<dbReference type="PANTHER" id="PTHR31613:SF2">
    <property type="entry name" value="AUGURIN"/>
    <property type="match status" value="1"/>
</dbReference>
<dbReference type="Pfam" id="PF15187">
    <property type="entry name" value="Augurin"/>
    <property type="match status" value="1"/>
</dbReference>
<proteinExistence type="evidence at transcript level"/>
<feature type="signal peptide" evidence="4">
    <location>
        <begin position="1"/>
        <end position="18"/>
    </location>
</feature>
<feature type="propeptide" id="PRO_0000446068" evidence="1">
    <location>
        <begin position="19"/>
        <end position="68"/>
    </location>
</feature>
<feature type="chain" id="PRO_0000378334" description="Augurin-B">
    <location>
        <begin position="71"/>
        <end position="144"/>
    </location>
</feature>
<feature type="region of interest" description="Disordered" evidence="5">
    <location>
        <begin position="109"/>
        <end position="144"/>
    </location>
</feature>
<feature type="compositionally biased region" description="Basic and acidic residues" evidence="5">
    <location>
        <begin position="112"/>
        <end position="122"/>
    </location>
</feature>
<feature type="sequence conflict" description="In Ref. 2; BC095747." evidence="6" ref="2">
    <original>T</original>
    <variation>A</variation>
    <location>
        <position position="10"/>
    </location>
</feature>
<feature type="sequence conflict" description="In Ref. 2; BC095747." evidence="6" ref="2">
    <original>S</original>
    <variation>P</variation>
    <location>
        <position position="22"/>
    </location>
</feature>
<feature type="sequence conflict" description="In Ref. 2; BC095747." evidence="6" ref="2">
    <original>E</original>
    <variation>D</variation>
    <location>
        <position position="44"/>
    </location>
</feature>
<keyword id="KW-1003">Cell membrane</keyword>
<keyword id="KW-0165">Cleavage on pair of basic residues</keyword>
<keyword id="KW-0963">Cytoplasm</keyword>
<keyword id="KW-0472">Membrane</keyword>
<keyword id="KW-1185">Reference proteome</keyword>
<keyword id="KW-0964">Secreted</keyword>
<keyword id="KW-0732">Signal</keyword>
<organism evidence="7">
    <name type="scientific">Danio rerio</name>
    <name type="common">Zebrafish</name>
    <name type="synonym">Brachydanio rerio</name>
    <dbReference type="NCBI Taxonomy" id="7955"/>
    <lineage>
        <taxon>Eukaryota</taxon>
        <taxon>Metazoa</taxon>
        <taxon>Chordata</taxon>
        <taxon>Craniata</taxon>
        <taxon>Vertebrata</taxon>
        <taxon>Euteleostomi</taxon>
        <taxon>Actinopterygii</taxon>
        <taxon>Neopterygii</taxon>
        <taxon>Teleostei</taxon>
        <taxon>Ostariophysi</taxon>
        <taxon>Cypriniformes</taxon>
        <taxon>Danionidae</taxon>
        <taxon>Danioninae</taxon>
        <taxon>Danio</taxon>
    </lineage>
</organism>
<protein>
    <recommendedName>
        <fullName evidence="6">Augurin-B</fullName>
    </recommendedName>
    <alternativeName>
        <fullName evidence="8">Esophageal cancer-related gene 4-B protein homolog</fullName>
    </alternativeName>
</protein>